<keyword id="KW-0997">Cell inner membrane</keyword>
<keyword id="KW-1003">Cell membrane</keyword>
<keyword id="KW-0445">Lipid transport</keyword>
<keyword id="KW-0472">Membrane</keyword>
<keyword id="KW-0812">Transmembrane</keyword>
<keyword id="KW-1133">Transmembrane helix</keyword>
<keyword id="KW-0813">Transport</keyword>
<reference key="1">
    <citation type="journal article" date="2011" name="J. Bacteriol.">
        <title>Comparative genomics of 28 Salmonella enterica isolates: evidence for CRISPR-mediated adaptive sublineage evolution.</title>
        <authorList>
            <person name="Fricke W.F."/>
            <person name="Mammel M.K."/>
            <person name="McDermott P.F."/>
            <person name="Tartera C."/>
            <person name="White D.G."/>
            <person name="Leclerc J.E."/>
            <person name="Ravel J."/>
            <person name="Cebula T.A."/>
        </authorList>
    </citation>
    <scope>NUCLEOTIDE SEQUENCE [LARGE SCALE GENOMIC DNA]</scope>
    <source>
        <strain>SL476</strain>
    </source>
</reference>
<gene>
    <name evidence="1" type="primary">lplT</name>
    <name type="ordered locus">SeHA_C3222</name>
</gene>
<organism>
    <name type="scientific">Salmonella heidelberg (strain SL476)</name>
    <dbReference type="NCBI Taxonomy" id="454169"/>
    <lineage>
        <taxon>Bacteria</taxon>
        <taxon>Pseudomonadati</taxon>
        <taxon>Pseudomonadota</taxon>
        <taxon>Gammaproteobacteria</taxon>
        <taxon>Enterobacterales</taxon>
        <taxon>Enterobacteriaceae</taxon>
        <taxon>Salmonella</taxon>
    </lineage>
</organism>
<protein>
    <recommendedName>
        <fullName evidence="1">Lysophospholipid transporter LplT</fullName>
    </recommendedName>
</protein>
<sequence length="400" mass="41602">MSESVRTNTSIWSKGMLSVIVAQFLSAFGDNALLFATLALLKTQFYPDWSQPVLQMVFVGAYILFAPFVGQIADSFAKGRVMMVANGLKLAGAAGICLGVNPFVGYTLVGIGAAAYSPAKYGILGELTTGDKLVKANGLMEASTIAAILLGSVAGGVLADWHVIAALVACALAYAGAVAANLFIPKLVAARPGQSWRLSAMTRSFFSACVVLWRNGETRFSLVGTGLFWGAGVTLRFLLVLWVPVALGITDNATPTYLNAMVAVGIVVGAGAAAKLVTLETVSRCMPAGILIGVVVAIFSLQHALLPAYALLLLIGMLGGFFVVPLNALLQERGKKSVGAGNAIAVQNLGENSAMLLMLGLYSLAVLVGVPAVAIGIGFGVLFALAIAALWIWQRRQASY</sequence>
<proteinExistence type="inferred from homology"/>
<comment type="function">
    <text evidence="1">Catalyzes the facilitated diffusion of 2-acyl-glycero-3-phosphoethanolamine (2-acyl-GPE) into the cell.</text>
</comment>
<comment type="subcellular location">
    <subcellularLocation>
        <location evidence="1">Cell inner membrane</location>
        <topology evidence="1">Multi-pass membrane protein</topology>
    </subcellularLocation>
</comment>
<comment type="similarity">
    <text evidence="1">Belongs to the major facilitator superfamily. LplT (TC 2.A.1.42) family.</text>
</comment>
<accession>B4TGR4</accession>
<evidence type="ECO:0000255" key="1">
    <source>
        <dbReference type="HAMAP-Rule" id="MF_01585"/>
    </source>
</evidence>
<dbReference type="EMBL" id="CP001120">
    <property type="protein sequence ID" value="ACF70257.1"/>
    <property type="molecule type" value="Genomic_DNA"/>
</dbReference>
<dbReference type="RefSeq" id="WP_000004694.1">
    <property type="nucleotide sequence ID" value="NC_011083.1"/>
</dbReference>
<dbReference type="SMR" id="B4TGR4"/>
<dbReference type="KEGG" id="seh:SeHA_C3222"/>
<dbReference type="HOGENOM" id="CLU_047399_0_0_6"/>
<dbReference type="Proteomes" id="UP000001866">
    <property type="component" value="Chromosome"/>
</dbReference>
<dbReference type="GO" id="GO:0005886">
    <property type="term" value="C:plasma membrane"/>
    <property type="evidence" value="ECO:0007669"/>
    <property type="project" value="UniProtKB-SubCell"/>
</dbReference>
<dbReference type="GO" id="GO:0051978">
    <property type="term" value="F:lysophospholipid:sodium symporter activity"/>
    <property type="evidence" value="ECO:0007669"/>
    <property type="project" value="InterPro"/>
</dbReference>
<dbReference type="CDD" id="cd06173">
    <property type="entry name" value="MFS_MefA_like"/>
    <property type="match status" value="1"/>
</dbReference>
<dbReference type="Gene3D" id="1.20.1250.20">
    <property type="entry name" value="MFS general substrate transporter like domains"/>
    <property type="match status" value="1"/>
</dbReference>
<dbReference type="HAMAP" id="MF_01585">
    <property type="entry name" value="MFS_LplT"/>
    <property type="match status" value="1"/>
</dbReference>
<dbReference type="InterPro" id="IPR023727">
    <property type="entry name" value="LysoPLipid__transptr_LplT"/>
</dbReference>
<dbReference type="InterPro" id="IPR011701">
    <property type="entry name" value="MFS"/>
</dbReference>
<dbReference type="InterPro" id="IPR036259">
    <property type="entry name" value="MFS_trans_sf"/>
</dbReference>
<dbReference type="NCBIfam" id="NF008397">
    <property type="entry name" value="PRK11195.1"/>
    <property type="match status" value="1"/>
</dbReference>
<dbReference type="PANTHER" id="PTHR43266">
    <property type="entry name" value="MACROLIDE-EFFLUX PROTEIN"/>
    <property type="match status" value="1"/>
</dbReference>
<dbReference type="PANTHER" id="PTHR43266:SF2">
    <property type="entry name" value="MAJOR FACILITATOR SUPERFAMILY (MFS) PROFILE DOMAIN-CONTAINING PROTEIN"/>
    <property type="match status" value="1"/>
</dbReference>
<dbReference type="Pfam" id="PF07690">
    <property type="entry name" value="MFS_1"/>
    <property type="match status" value="1"/>
</dbReference>
<dbReference type="SUPFAM" id="SSF103473">
    <property type="entry name" value="MFS general substrate transporter"/>
    <property type="match status" value="1"/>
</dbReference>
<feature type="chain" id="PRO_1000201277" description="Lysophospholipid transporter LplT">
    <location>
        <begin position="1"/>
        <end position="400"/>
    </location>
</feature>
<feature type="transmembrane region" description="Helical" evidence="1">
    <location>
        <begin position="19"/>
        <end position="39"/>
    </location>
</feature>
<feature type="transmembrane region" description="Helical" evidence="1">
    <location>
        <begin position="53"/>
        <end position="73"/>
    </location>
</feature>
<feature type="transmembrane region" description="Helical" evidence="1">
    <location>
        <begin position="91"/>
        <end position="111"/>
    </location>
</feature>
<feature type="transmembrane region" description="Helical" evidence="1">
    <location>
        <begin position="139"/>
        <end position="159"/>
    </location>
</feature>
<feature type="transmembrane region" description="Helical" evidence="1">
    <location>
        <begin position="164"/>
        <end position="184"/>
    </location>
</feature>
<feature type="transmembrane region" description="Helical" evidence="1">
    <location>
        <begin position="195"/>
        <end position="213"/>
    </location>
</feature>
<feature type="transmembrane region" description="Helical" evidence="1">
    <location>
        <begin position="227"/>
        <end position="247"/>
    </location>
</feature>
<feature type="transmembrane region" description="Helical" evidence="1">
    <location>
        <begin position="257"/>
        <end position="277"/>
    </location>
</feature>
<feature type="transmembrane region" description="Helical" evidence="1">
    <location>
        <begin position="281"/>
        <end position="301"/>
    </location>
</feature>
<feature type="transmembrane region" description="Helical" evidence="1">
    <location>
        <begin position="304"/>
        <end position="324"/>
    </location>
</feature>
<feature type="transmembrane region" description="Helical" evidence="1">
    <location>
        <begin position="352"/>
        <end position="372"/>
    </location>
</feature>
<feature type="transmembrane region" description="Helical" evidence="1">
    <location>
        <begin position="373"/>
        <end position="393"/>
    </location>
</feature>
<name>LPLT_SALHS</name>